<reference key="1">
    <citation type="journal article" date="2004" name="Nature">
        <title>Genome sequence of the Brown Norway rat yields insights into mammalian evolution.</title>
        <authorList>
            <person name="Gibbs R.A."/>
            <person name="Weinstock G.M."/>
            <person name="Metzker M.L."/>
            <person name="Muzny D.M."/>
            <person name="Sodergren E.J."/>
            <person name="Scherer S."/>
            <person name="Scott G."/>
            <person name="Steffen D."/>
            <person name="Worley K.C."/>
            <person name="Burch P.E."/>
            <person name="Okwuonu G."/>
            <person name="Hines S."/>
            <person name="Lewis L."/>
            <person name="Deramo C."/>
            <person name="Delgado O."/>
            <person name="Dugan-Rocha S."/>
            <person name="Miner G."/>
            <person name="Morgan M."/>
            <person name="Hawes A."/>
            <person name="Gill R."/>
            <person name="Holt R.A."/>
            <person name="Adams M.D."/>
            <person name="Amanatides P.G."/>
            <person name="Baden-Tillson H."/>
            <person name="Barnstead M."/>
            <person name="Chin S."/>
            <person name="Evans C.A."/>
            <person name="Ferriera S."/>
            <person name="Fosler C."/>
            <person name="Glodek A."/>
            <person name="Gu Z."/>
            <person name="Jennings D."/>
            <person name="Kraft C.L."/>
            <person name="Nguyen T."/>
            <person name="Pfannkoch C.M."/>
            <person name="Sitter C."/>
            <person name="Sutton G.G."/>
            <person name="Venter J.C."/>
            <person name="Woodage T."/>
            <person name="Smith D."/>
            <person name="Lee H.-M."/>
            <person name="Gustafson E."/>
            <person name="Cahill P."/>
            <person name="Kana A."/>
            <person name="Doucette-Stamm L."/>
            <person name="Weinstock K."/>
            <person name="Fechtel K."/>
            <person name="Weiss R.B."/>
            <person name="Dunn D.M."/>
            <person name="Green E.D."/>
            <person name="Blakesley R.W."/>
            <person name="Bouffard G.G."/>
            <person name="De Jong P.J."/>
            <person name="Osoegawa K."/>
            <person name="Zhu B."/>
            <person name="Marra M."/>
            <person name="Schein J."/>
            <person name="Bosdet I."/>
            <person name="Fjell C."/>
            <person name="Jones S."/>
            <person name="Krzywinski M."/>
            <person name="Mathewson C."/>
            <person name="Siddiqui A."/>
            <person name="Wye N."/>
            <person name="McPherson J."/>
            <person name="Zhao S."/>
            <person name="Fraser C.M."/>
            <person name="Shetty J."/>
            <person name="Shatsman S."/>
            <person name="Geer K."/>
            <person name="Chen Y."/>
            <person name="Abramzon S."/>
            <person name="Nierman W.C."/>
            <person name="Havlak P.H."/>
            <person name="Chen R."/>
            <person name="Durbin K.J."/>
            <person name="Egan A."/>
            <person name="Ren Y."/>
            <person name="Song X.-Z."/>
            <person name="Li B."/>
            <person name="Liu Y."/>
            <person name="Qin X."/>
            <person name="Cawley S."/>
            <person name="Cooney A.J."/>
            <person name="D'Souza L.M."/>
            <person name="Martin K."/>
            <person name="Wu J.Q."/>
            <person name="Gonzalez-Garay M.L."/>
            <person name="Jackson A.R."/>
            <person name="Kalafus K.J."/>
            <person name="McLeod M.P."/>
            <person name="Milosavljevic A."/>
            <person name="Virk D."/>
            <person name="Volkov A."/>
            <person name="Wheeler D.A."/>
            <person name="Zhang Z."/>
            <person name="Bailey J.A."/>
            <person name="Eichler E.E."/>
            <person name="Tuzun E."/>
            <person name="Birney E."/>
            <person name="Mongin E."/>
            <person name="Ureta-Vidal A."/>
            <person name="Woodwark C."/>
            <person name="Zdobnov E."/>
            <person name="Bork P."/>
            <person name="Suyama M."/>
            <person name="Torrents D."/>
            <person name="Alexandersson M."/>
            <person name="Trask B.J."/>
            <person name="Young J.M."/>
            <person name="Huang H."/>
            <person name="Wang H."/>
            <person name="Xing H."/>
            <person name="Daniels S."/>
            <person name="Gietzen D."/>
            <person name="Schmidt J."/>
            <person name="Stevens K."/>
            <person name="Vitt U."/>
            <person name="Wingrove J."/>
            <person name="Camara F."/>
            <person name="Mar Alba M."/>
            <person name="Abril J.F."/>
            <person name="Guigo R."/>
            <person name="Smit A."/>
            <person name="Dubchak I."/>
            <person name="Rubin E.M."/>
            <person name="Couronne O."/>
            <person name="Poliakov A."/>
            <person name="Huebner N."/>
            <person name="Ganten D."/>
            <person name="Goesele C."/>
            <person name="Hummel O."/>
            <person name="Kreitler T."/>
            <person name="Lee Y.-A."/>
            <person name="Monti J."/>
            <person name="Schulz H."/>
            <person name="Zimdahl H."/>
            <person name="Himmelbauer H."/>
            <person name="Lehrach H."/>
            <person name="Jacob H.J."/>
            <person name="Bromberg S."/>
            <person name="Gullings-Handley J."/>
            <person name="Jensen-Seaman M.I."/>
            <person name="Kwitek A.E."/>
            <person name="Lazar J."/>
            <person name="Pasko D."/>
            <person name="Tonellato P.J."/>
            <person name="Twigger S."/>
            <person name="Ponting C.P."/>
            <person name="Duarte J.M."/>
            <person name="Rice S."/>
            <person name="Goodstadt L."/>
            <person name="Beatson S.A."/>
            <person name="Emes R.D."/>
            <person name="Winter E.E."/>
            <person name="Webber C."/>
            <person name="Brandt P."/>
            <person name="Nyakatura G."/>
            <person name="Adetobi M."/>
            <person name="Chiaromonte F."/>
            <person name="Elnitski L."/>
            <person name="Eswara P."/>
            <person name="Hardison R.C."/>
            <person name="Hou M."/>
            <person name="Kolbe D."/>
            <person name="Makova K."/>
            <person name="Miller W."/>
            <person name="Nekrutenko A."/>
            <person name="Riemer C."/>
            <person name="Schwartz S."/>
            <person name="Taylor J."/>
            <person name="Yang S."/>
            <person name="Zhang Y."/>
            <person name="Lindpaintner K."/>
            <person name="Andrews T.D."/>
            <person name="Caccamo M."/>
            <person name="Clamp M."/>
            <person name="Clarke L."/>
            <person name="Curwen V."/>
            <person name="Durbin R.M."/>
            <person name="Eyras E."/>
            <person name="Searle S.M."/>
            <person name="Cooper G.M."/>
            <person name="Batzoglou S."/>
            <person name="Brudno M."/>
            <person name="Sidow A."/>
            <person name="Stone E.A."/>
            <person name="Payseur B.A."/>
            <person name="Bourque G."/>
            <person name="Lopez-Otin C."/>
            <person name="Puente X.S."/>
            <person name="Chakrabarti K."/>
            <person name="Chatterji S."/>
            <person name="Dewey C."/>
            <person name="Pachter L."/>
            <person name="Bray N."/>
            <person name="Yap V.B."/>
            <person name="Caspi A."/>
            <person name="Tesler G."/>
            <person name="Pevzner P.A."/>
            <person name="Haussler D."/>
            <person name="Roskin K.M."/>
            <person name="Baertsch R."/>
            <person name="Clawson H."/>
            <person name="Furey T.S."/>
            <person name="Hinrichs A.S."/>
            <person name="Karolchik D."/>
            <person name="Kent W.J."/>
            <person name="Rosenbloom K.R."/>
            <person name="Trumbower H."/>
            <person name="Weirauch M."/>
            <person name="Cooper D.N."/>
            <person name="Stenson P.D."/>
            <person name="Ma B."/>
            <person name="Brent M."/>
            <person name="Arumugam M."/>
            <person name="Shteynberg D."/>
            <person name="Copley R.R."/>
            <person name="Taylor M.S."/>
            <person name="Riethman H."/>
            <person name="Mudunuri U."/>
            <person name="Peterson J."/>
            <person name="Guyer M."/>
            <person name="Felsenfeld A."/>
            <person name="Old S."/>
            <person name="Mockrin S."/>
            <person name="Collins F.S."/>
        </authorList>
    </citation>
    <scope>NUCLEOTIDE SEQUENCE [LARGE SCALE GENOMIC DNA]</scope>
    <source>
        <strain>Brown Norway</strain>
    </source>
</reference>
<reference key="2">
    <citation type="journal article" date="2011" name="Proc. Natl. Acad. Sci. U.S.A.">
        <title>Tumor suppressor down-regulated in renal cell carcinoma 1 (DRR1) is a stress-induced actin bundling factor that modulates synaptic efficacy and cognition.</title>
        <authorList>
            <person name="Schmidt M.V."/>
            <person name="Schuelke J.P."/>
            <person name="Liebl C."/>
            <person name="Stiess M."/>
            <person name="Avrabos C."/>
            <person name="Bock J."/>
            <person name="Wochnik G.M."/>
            <person name="Davies H.A."/>
            <person name="Zimmermann N."/>
            <person name="Scharf S.H."/>
            <person name="Truembach D."/>
            <person name="Wurst W."/>
            <person name="Zieglgaensberger W."/>
            <person name="Turck C."/>
            <person name="Holsboer F."/>
            <person name="Stewart M.G."/>
            <person name="Bradke F."/>
            <person name="Eder M."/>
            <person name="Mueller M.B."/>
            <person name="Rein T."/>
        </authorList>
    </citation>
    <scope>SUBCELLULAR LOCATION</scope>
</reference>
<accession>M0R3K6</accession>
<protein>
    <recommendedName>
        <fullName evidence="5">Actin-associated protein FAM107A</fullName>
    </recommendedName>
</protein>
<gene>
    <name evidence="6" type="primary">Fam107a</name>
</gene>
<dbReference type="EMBL" id="AABR07017233">
    <property type="status" value="NOT_ANNOTATED_CDS"/>
    <property type="molecule type" value="Genomic_DNA"/>
</dbReference>
<dbReference type="EMBL" id="AABR07017234">
    <property type="status" value="NOT_ANNOTATED_CDS"/>
    <property type="molecule type" value="Genomic_DNA"/>
</dbReference>
<dbReference type="FunCoup" id="M0R3K6">
    <property type="interactions" value="354"/>
</dbReference>
<dbReference type="STRING" id="10116.ENSRNOP00000057872"/>
<dbReference type="PaxDb" id="10116-ENSRNOP00000063922"/>
<dbReference type="AGR" id="RGD:1306327"/>
<dbReference type="RGD" id="1306327">
    <property type="gene designation" value="Fam107a"/>
</dbReference>
<dbReference type="VEuPathDB" id="HostDB:ENSRNOG00000033261"/>
<dbReference type="eggNOG" id="ENOG502RZJK">
    <property type="taxonomic scope" value="Eukaryota"/>
</dbReference>
<dbReference type="HOGENOM" id="CLU_122902_2_0_1"/>
<dbReference type="InParanoid" id="M0R3K6"/>
<dbReference type="PRO" id="PR:M0R3K6"/>
<dbReference type="Proteomes" id="UP000002494">
    <property type="component" value="Chromosome 15"/>
</dbReference>
<dbReference type="Bgee" id="ENSRNOG00000033261">
    <property type="expression patterns" value="Expressed in Ammon's horn and 18 other cell types or tissues"/>
</dbReference>
<dbReference type="ExpressionAtlas" id="M0R3K6">
    <property type="expression patterns" value="baseline and differential"/>
</dbReference>
<dbReference type="GO" id="GO:0015629">
    <property type="term" value="C:actin cytoskeleton"/>
    <property type="evidence" value="ECO:0000250"/>
    <property type="project" value="UniProtKB"/>
</dbReference>
<dbReference type="GO" id="GO:0005737">
    <property type="term" value="C:cytoplasm"/>
    <property type="evidence" value="ECO:0000250"/>
    <property type="project" value="UniProtKB"/>
</dbReference>
<dbReference type="GO" id="GO:0005925">
    <property type="term" value="C:focal adhesion"/>
    <property type="evidence" value="ECO:0000250"/>
    <property type="project" value="UniProtKB"/>
</dbReference>
<dbReference type="GO" id="GO:0098978">
    <property type="term" value="C:glutamatergic synapse"/>
    <property type="evidence" value="ECO:0000266"/>
    <property type="project" value="RGD"/>
</dbReference>
<dbReference type="GO" id="GO:0043005">
    <property type="term" value="C:neuron projection"/>
    <property type="evidence" value="ECO:0000314"/>
    <property type="project" value="UniProtKB"/>
</dbReference>
<dbReference type="GO" id="GO:0005634">
    <property type="term" value="C:nucleus"/>
    <property type="evidence" value="ECO:0000250"/>
    <property type="project" value="UniProtKB"/>
</dbReference>
<dbReference type="GO" id="GO:0098871">
    <property type="term" value="C:postsynaptic actin cytoskeleton"/>
    <property type="evidence" value="ECO:0000266"/>
    <property type="project" value="RGD"/>
</dbReference>
<dbReference type="GO" id="GO:0099143">
    <property type="term" value="C:presynaptic actin cytoskeleton"/>
    <property type="evidence" value="ECO:0000266"/>
    <property type="project" value="RGD"/>
</dbReference>
<dbReference type="GO" id="GO:0032587">
    <property type="term" value="C:ruffle membrane"/>
    <property type="evidence" value="ECO:0000250"/>
    <property type="project" value="UniProtKB"/>
</dbReference>
<dbReference type="GO" id="GO:0001725">
    <property type="term" value="C:stress fiber"/>
    <property type="evidence" value="ECO:0000250"/>
    <property type="project" value="UniProtKB"/>
</dbReference>
<dbReference type="GO" id="GO:0045202">
    <property type="term" value="C:synapse"/>
    <property type="evidence" value="ECO:0000250"/>
    <property type="project" value="UniProtKB"/>
</dbReference>
<dbReference type="GO" id="GO:0003779">
    <property type="term" value="F:actin binding"/>
    <property type="evidence" value="ECO:0007669"/>
    <property type="project" value="UniProtKB-KW"/>
</dbReference>
<dbReference type="GO" id="GO:0051017">
    <property type="term" value="P:actin filament bundle assembly"/>
    <property type="evidence" value="ECO:0000250"/>
    <property type="project" value="UniProtKB"/>
</dbReference>
<dbReference type="GO" id="GO:0030041">
    <property type="term" value="P:actin filament polymerization"/>
    <property type="evidence" value="ECO:0000250"/>
    <property type="project" value="UniProtKB"/>
</dbReference>
<dbReference type="GO" id="GO:0071385">
    <property type="term" value="P:cellular response to glucocorticoid stimulus"/>
    <property type="evidence" value="ECO:0000250"/>
    <property type="project" value="UniProtKB"/>
</dbReference>
<dbReference type="GO" id="GO:0031669">
    <property type="term" value="P:cellular response to nutrient levels"/>
    <property type="evidence" value="ECO:0000250"/>
    <property type="project" value="UniProtKB"/>
</dbReference>
<dbReference type="GO" id="GO:0050890">
    <property type="term" value="P:cognition"/>
    <property type="evidence" value="ECO:0000250"/>
    <property type="project" value="UniProtKB"/>
</dbReference>
<dbReference type="GO" id="GO:0051895">
    <property type="term" value="P:negative regulation of focal adhesion assembly"/>
    <property type="evidence" value="ECO:0000250"/>
    <property type="project" value="UniProtKB"/>
</dbReference>
<dbReference type="GO" id="GO:2000134">
    <property type="term" value="P:negative regulation of G1/S transition of mitotic cell cycle"/>
    <property type="evidence" value="ECO:0000250"/>
    <property type="project" value="UniProtKB"/>
</dbReference>
<dbReference type="GO" id="GO:1900272">
    <property type="term" value="P:negative regulation of long-term synaptic potentiation"/>
    <property type="evidence" value="ECO:0000250"/>
    <property type="project" value="UniProtKB"/>
</dbReference>
<dbReference type="GO" id="GO:0030335">
    <property type="term" value="P:positive regulation of cell migration"/>
    <property type="evidence" value="ECO:0000266"/>
    <property type="project" value="RGD"/>
</dbReference>
<dbReference type="GO" id="GO:0031398">
    <property type="term" value="P:positive regulation of protein ubiquitination"/>
    <property type="evidence" value="ECO:0000250"/>
    <property type="project" value="UniProtKB"/>
</dbReference>
<dbReference type="GO" id="GO:0032956">
    <property type="term" value="P:regulation of actin cytoskeleton organization"/>
    <property type="evidence" value="ECO:0000250"/>
    <property type="project" value="UniProtKB"/>
</dbReference>
<dbReference type="GO" id="GO:0001558">
    <property type="term" value="P:regulation of cell growth"/>
    <property type="evidence" value="ECO:0000266"/>
    <property type="project" value="RGD"/>
</dbReference>
<dbReference type="GO" id="GO:0070507">
    <property type="term" value="P:regulation of microtubule cytoskeleton organization"/>
    <property type="evidence" value="ECO:0000250"/>
    <property type="project" value="UniProtKB"/>
</dbReference>
<dbReference type="GO" id="GO:0150052">
    <property type="term" value="P:regulation of postsynapse assembly"/>
    <property type="evidence" value="ECO:0000266"/>
    <property type="project" value="RGD"/>
</dbReference>
<dbReference type="GO" id="GO:0031647">
    <property type="term" value="P:regulation of protein stability"/>
    <property type="evidence" value="ECO:0000250"/>
    <property type="project" value="UniProtKB"/>
</dbReference>
<dbReference type="InterPro" id="IPR009533">
    <property type="entry name" value="FAM107"/>
</dbReference>
<dbReference type="PANTHER" id="PTHR16768:SF3">
    <property type="entry name" value="ACTIN-ASSOCIATED PROTEIN FAM107A"/>
    <property type="match status" value="1"/>
</dbReference>
<dbReference type="PANTHER" id="PTHR16768">
    <property type="entry name" value="DOWN REGULATED IN RENAL CARCINOMA 1/TU3A"/>
    <property type="match status" value="1"/>
</dbReference>
<dbReference type="Pfam" id="PF06625">
    <property type="entry name" value="DUF1151"/>
    <property type="match status" value="1"/>
</dbReference>
<feature type="chain" id="PRO_0000444956" description="Actin-associated protein FAM107A">
    <location>
        <begin position="1"/>
        <end position="131"/>
    </location>
</feature>
<feature type="coiled-coil region" evidence="3">
    <location>
        <begin position="57"/>
        <end position="77"/>
    </location>
</feature>
<feature type="short sequence motif" description="Nuclear localization signal" evidence="1">
    <location>
        <begin position="61"/>
        <end position="71"/>
    </location>
</feature>
<keyword id="KW-0009">Actin-binding</keyword>
<keyword id="KW-0131">Cell cycle</keyword>
<keyword id="KW-0965">Cell junction</keyword>
<keyword id="KW-1003">Cell membrane</keyword>
<keyword id="KW-0966">Cell projection</keyword>
<keyword id="KW-0175">Coiled coil</keyword>
<keyword id="KW-0963">Cytoplasm</keyword>
<keyword id="KW-0206">Cytoskeleton</keyword>
<keyword id="KW-0341">Growth regulation</keyword>
<keyword id="KW-0472">Membrane</keyword>
<keyword id="KW-0539">Nucleus</keyword>
<keyword id="KW-1185">Reference proteome</keyword>
<keyword id="KW-0346">Stress response</keyword>
<keyword id="KW-0770">Synapse</keyword>
<organism>
    <name type="scientific">Rattus norvegicus</name>
    <name type="common">Rat</name>
    <dbReference type="NCBI Taxonomy" id="10116"/>
    <lineage>
        <taxon>Eukaryota</taxon>
        <taxon>Metazoa</taxon>
        <taxon>Chordata</taxon>
        <taxon>Craniata</taxon>
        <taxon>Vertebrata</taxon>
        <taxon>Euteleostomi</taxon>
        <taxon>Mammalia</taxon>
        <taxon>Eutheria</taxon>
        <taxon>Euarchontoglires</taxon>
        <taxon>Glires</taxon>
        <taxon>Rodentia</taxon>
        <taxon>Myomorpha</taxon>
        <taxon>Muroidea</taxon>
        <taxon>Muridae</taxon>
        <taxon>Murinae</taxon>
        <taxon>Rattus</taxon>
    </lineage>
</organism>
<proteinExistence type="inferred from homology"/>
<sequence length="131" mass="15930">MARAGPEYREWNSELIKPKKLLNPVKASRSHQELHRELLMNHKRGLGMDRKPELQRVLEHRRRNQLIKKKEEELEAKRMQCPFEQELLRRQQRLNQLENPPQREEDHAPEFIKVRENLRRITTLTSEERAL</sequence>
<evidence type="ECO:0000250" key="1">
    <source>
        <dbReference type="UniProtKB" id="O95990"/>
    </source>
</evidence>
<evidence type="ECO:0000250" key="2">
    <source>
        <dbReference type="UniProtKB" id="Q78TU8"/>
    </source>
</evidence>
<evidence type="ECO:0000255" key="3"/>
<evidence type="ECO:0000269" key="4">
    <source>
    </source>
</evidence>
<evidence type="ECO:0000305" key="5"/>
<evidence type="ECO:0000312" key="6">
    <source>
        <dbReference type="RGD" id="1306327"/>
    </source>
</evidence>
<name>F107A_RAT</name>
<comment type="function">
    <text evidence="1 2">Stress-inducible actin-binding protein that plays a role in synaptic and cognitive functions by modulating actin filamentous (F-actin) dynamics. Mediates polymerization of globular actin to F-actin. Also binds to, stabilizes and bundles F-actin. Involved in synaptic function by regulating neurite outgrowth in an actin-dependent manner and for the acquisition of hippocampus-dependent cognitive function, such as learning and long-term memory (By similarity). Plays a role in the actin and microtubule cytoskeleton organization; negatively regulates focal adhesion (FA) assembly promoting malignant glial cell migration in an actin-, microtubule- and MAP1A-dependent manner. Also involved in neuroblastoma G1/S phase cell cycle progression and cell proliferation inhibition by stimulating ubiquitination of NF-kappa-B subunit RELA and NF-kappa-B degradation in a COMMD1- and actin-dependent manner. May play a role in tumor development (By similarity).</text>
</comment>
<comment type="subunit">
    <text evidence="1 2">Interacts with ACTB. Interacts with COMMD1; this interaction stabilizes COMMD1 in the nucleus. Interacts with MAP1A. Interacts with PRDX1 (By similarity). Interacts with F-actin (By similarity).</text>
</comment>
<comment type="subcellular location">
    <subcellularLocation>
        <location evidence="1">Nucleus</location>
    </subcellularLocation>
    <subcellularLocation>
        <location evidence="1">Cytoplasm</location>
        <location evidence="1">Cytoskeleton</location>
        <location evidence="1">Stress fiber</location>
    </subcellularLocation>
    <subcellularLocation>
        <location evidence="1">Cell junction</location>
        <location evidence="1">Focal adhesion</location>
    </subcellularLocation>
    <subcellularLocation>
        <location evidence="1">Cell projection</location>
        <location evidence="1">Ruffle membrane</location>
    </subcellularLocation>
    <subcellularLocation>
        <location evidence="2">Synapse</location>
    </subcellularLocation>
    <subcellularLocation>
        <location evidence="4">Cell projection</location>
    </subcellularLocation>
    <text evidence="1">Colocalizes with F-actin and COMMD1 in the nucleus. Colocalizes with MAP1A along actin stress fibers and membrane ruffles.</text>
</comment>